<reference key="1">
    <citation type="journal article" date="2007" name="PLoS Genet.">
        <title>Patterns and implications of gene gain and loss in the evolution of Prochlorococcus.</title>
        <authorList>
            <person name="Kettler G.C."/>
            <person name="Martiny A.C."/>
            <person name="Huang K."/>
            <person name="Zucker J."/>
            <person name="Coleman M.L."/>
            <person name="Rodrigue S."/>
            <person name="Chen F."/>
            <person name="Lapidus A."/>
            <person name="Ferriera S."/>
            <person name="Johnson J."/>
            <person name="Steglich C."/>
            <person name="Church G.M."/>
            <person name="Richardson P."/>
            <person name="Chisholm S.W."/>
        </authorList>
    </citation>
    <scope>NUCLEOTIDE SEQUENCE [LARGE SCALE GENOMIC DNA]</scope>
    <source>
        <strain>MIT 9301</strain>
    </source>
</reference>
<name>QUEF_PROM0</name>
<feature type="chain" id="PRO_1000062401" description="NADPH-dependent 7-cyano-7-deazaguanine reductase">
    <location>
        <begin position="1"/>
        <end position="136"/>
    </location>
</feature>
<feature type="active site" description="Thioimide intermediate" evidence="1">
    <location>
        <position position="50"/>
    </location>
</feature>
<feature type="active site" description="Proton donor" evidence="1">
    <location>
        <position position="57"/>
    </location>
</feature>
<feature type="binding site" evidence="1">
    <location>
        <begin position="72"/>
        <end position="74"/>
    </location>
    <ligand>
        <name>substrate</name>
    </ligand>
</feature>
<feature type="binding site" evidence="1">
    <location>
        <begin position="91"/>
        <end position="92"/>
    </location>
    <ligand>
        <name>substrate</name>
    </ligand>
</feature>
<comment type="function">
    <text evidence="1">Catalyzes the NADPH-dependent reduction of 7-cyano-7-deazaguanine (preQ0) to 7-aminomethyl-7-deazaguanine (preQ1).</text>
</comment>
<comment type="catalytic activity">
    <reaction evidence="1">
        <text>7-aminomethyl-7-carbaguanine + 2 NADP(+) = 7-cyano-7-deazaguanine + 2 NADPH + 3 H(+)</text>
        <dbReference type="Rhea" id="RHEA:13409"/>
        <dbReference type="ChEBI" id="CHEBI:15378"/>
        <dbReference type="ChEBI" id="CHEBI:45075"/>
        <dbReference type="ChEBI" id="CHEBI:57783"/>
        <dbReference type="ChEBI" id="CHEBI:58349"/>
        <dbReference type="ChEBI" id="CHEBI:58703"/>
        <dbReference type="EC" id="1.7.1.13"/>
    </reaction>
</comment>
<comment type="pathway">
    <text evidence="1">tRNA modification; tRNA-queuosine biosynthesis.</text>
</comment>
<comment type="subcellular location">
    <subcellularLocation>
        <location evidence="1">Cytoplasm</location>
    </subcellularLocation>
</comment>
<comment type="similarity">
    <text evidence="1">Belongs to the GTP cyclohydrolase I family. QueF type 1 subfamily.</text>
</comment>
<protein>
    <recommendedName>
        <fullName evidence="1">NADPH-dependent 7-cyano-7-deazaguanine reductase</fullName>
        <ecNumber evidence="1">1.7.1.13</ecNumber>
    </recommendedName>
    <alternativeName>
        <fullName evidence="1">7-cyano-7-carbaguanine reductase</fullName>
    </alternativeName>
    <alternativeName>
        <fullName evidence="1">NADPH-dependent nitrile oxidoreductase</fullName>
    </alternativeName>
    <alternativeName>
        <fullName evidence="1">PreQ(0) reductase</fullName>
    </alternativeName>
</protein>
<proteinExistence type="inferred from homology"/>
<evidence type="ECO:0000255" key="1">
    <source>
        <dbReference type="HAMAP-Rule" id="MF_00818"/>
    </source>
</evidence>
<keyword id="KW-0963">Cytoplasm</keyword>
<keyword id="KW-0521">NADP</keyword>
<keyword id="KW-0560">Oxidoreductase</keyword>
<keyword id="KW-0671">Queuosine biosynthesis</keyword>
<keyword id="KW-1185">Reference proteome</keyword>
<gene>
    <name evidence="1" type="primary">queF</name>
    <name type="ordered locus">P9301_16511</name>
</gene>
<sequence>MSKAKLDDSTQRPLYGERIIEESKIICFDNPNKKRIYEISIQLPEFTCKCPFSGYPDFAKLSIIYQPNLKVYELKSLKLYINSFRDIKISHEEVVNRIMDDLVNEGSPHWIHLNAAFNPRGNVSMQLDIFSGQKKN</sequence>
<accession>A3PEU9</accession>
<organism>
    <name type="scientific">Prochlorococcus marinus (strain MIT 9301)</name>
    <dbReference type="NCBI Taxonomy" id="167546"/>
    <lineage>
        <taxon>Bacteria</taxon>
        <taxon>Bacillati</taxon>
        <taxon>Cyanobacteriota</taxon>
        <taxon>Cyanophyceae</taxon>
        <taxon>Synechococcales</taxon>
        <taxon>Prochlorococcaceae</taxon>
        <taxon>Prochlorococcus</taxon>
    </lineage>
</organism>
<dbReference type="EC" id="1.7.1.13" evidence="1"/>
<dbReference type="EMBL" id="CP000576">
    <property type="protein sequence ID" value="ABO18274.1"/>
    <property type="molecule type" value="Genomic_DNA"/>
</dbReference>
<dbReference type="RefSeq" id="WP_011863572.1">
    <property type="nucleotide sequence ID" value="NC_009091.1"/>
</dbReference>
<dbReference type="SMR" id="A3PEU9"/>
<dbReference type="STRING" id="167546.P9301_16511"/>
<dbReference type="KEGG" id="pmg:P9301_16511"/>
<dbReference type="eggNOG" id="COG0780">
    <property type="taxonomic scope" value="Bacteria"/>
</dbReference>
<dbReference type="HOGENOM" id="CLU_102489_1_1_3"/>
<dbReference type="OrthoDB" id="9795077at2"/>
<dbReference type="UniPathway" id="UPA00392"/>
<dbReference type="Proteomes" id="UP000001430">
    <property type="component" value="Chromosome"/>
</dbReference>
<dbReference type="GO" id="GO:0005737">
    <property type="term" value="C:cytoplasm"/>
    <property type="evidence" value="ECO:0007669"/>
    <property type="project" value="UniProtKB-SubCell"/>
</dbReference>
<dbReference type="GO" id="GO:0033739">
    <property type="term" value="F:preQ1 synthase activity"/>
    <property type="evidence" value="ECO:0007669"/>
    <property type="project" value="UniProtKB-UniRule"/>
</dbReference>
<dbReference type="GO" id="GO:0008616">
    <property type="term" value="P:queuosine biosynthetic process"/>
    <property type="evidence" value="ECO:0007669"/>
    <property type="project" value="UniProtKB-UniRule"/>
</dbReference>
<dbReference type="GO" id="GO:0006400">
    <property type="term" value="P:tRNA modification"/>
    <property type="evidence" value="ECO:0007669"/>
    <property type="project" value="UniProtKB-UniRule"/>
</dbReference>
<dbReference type="Gene3D" id="3.30.1130.10">
    <property type="match status" value="1"/>
</dbReference>
<dbReference type="HAMAP" id="MF_00818">
    <property type="entry name" value="QueF_type1"/>
    <property type="match status" value="1"/>
</dbReference>
<dbReference type="InterPro" id="IPR043133">
    <property type="entry name" value="GTP-CH-I_C/QueF"/>
</dbReference>
<dbReference type="InterPro" id="IPR050084">
    <property type="entry name" value="NADPH_dep_7-cyano-7-deazaG_red"/>
</dbReference>
<dbReference type="InterPro" id="IPR029500">
    <property type="entry name" value="QueF"/>
</dbReference>
<dbReference type="InterPro" id="IPR016856">
    <property type="entry name" value="QueF_type1"/>
</dbReference>
<dbReference type="NCBIfam" id="TIGR03139">
    <property type="entry name" value="QueF-II"/>
    <property type="match status" value="1"/>
</dbReference>
<dbReference type="PANTHER" id="PTHR34354">
    <property type="entry name" value="NADPH-DEPENDENT 7-CYANO-7-DEAZAGUANINE REDUCTASE"/>
    <property type="match status" value="1"/>
</dbReference>
<dbReference type="PANTHER" id="PTHR34354:SF1">
    <property type="entry name" value="NADPH-DEPENDENT 7-CYANO-7-DEAZAGUANINE REDUCTASE"/>
    <property type="match status" value="1"/>
</dbReference>
<dbReference type="Pfam" id="PF14489">
    <property type="entry name" value="QueF"/>
    <property type="match status" value="1"/>
</dbReference>
<dbReference type="PIRSF" id="PIRSF027377">
    <property type="entry name" value="Nitrile_oxidored_QueF"/>
    <property type="match status" value="1"/>
</dbReference>
<dbReference type="SUPFAM" id="SSF55620">
    <property type="entry name" value="Tetrahydrobiopterin biosynthesis enzymes-like"/>
    <property type="match status" value="1"/>
</dbReference>